<comment type="function">
    <text evidence="1">With S4 and S12 plays an important role in translational accuracy.</text>
</comment>
<comment type="function">
    <text evidence="1">Located at the back of the 30S subunit body where it stabilizes the conformation of the head with respect to the body.</text>
</comment>
<comment type="subunit">
    <text evidence="1">Part of the 30S ribosomal subunit. Contacts proteins S4 and S8.</text>
</comment>
<comment type="domain">
    <text>The N-terminal domain interacts with the head of the 30S subunit; the C-terminal domain interacts with the body and contacts protein S4. The interaction surface between S4 and S5 is involved in control of translational fidelity.</text>
</comment>
<comment type="similarity">
    <text evidence="1">Belongs to the universal ribosomal protein uS5 family.</text>
</comment>
<evidence type="ECO:0000255" key="1">
    <source>
        <dbReference type="HAMAP-Rule" id="MF_01307"/>
    </source>
</evidence>
<evidence type="ECO:0000305" key="2"/>
<organism>
    <name type="scientific">Brucella abortus (strain 2308)</name>
    <dbReference type="NCBI Taxonomy" id="359391"/>
    <lineage>
        <taxon>Bacteria</taxon>
        <taxon>Pseudomonadati</taxon>
        <taxon>Pseudomonadota</taxon>
        <taxon>Alphaproteobacteria</taxon>
        <taxon>Hyphomicrobiales</taxon>
        <taxon>Brucellaceae</taxon>
        <taxon>Brucella/Ochrobactrum group</taxon>
        <taxon>Brucella</taxon>
    </lineage>
</organism>
<feature type="chain" id="PRO_0000230334" description="Small ribosomal subunit protein uS5">
    <location>
        <begin position="1"/>
        <end position="186"/>
    </location>
</feature>
<feature type="domain" description="S5 DRBM" evidence="1">
    <location>
        <begin position="20"/>
        <end position="83"/>
    </location>
</feature>
<name>RS5_BRUA2</name>
<dbReference type="EMBL" id="AM040264">
    <property type="protein sequence ID" value="CAJ11194.1"/>
    <property type="molecule type" value="Genomic_DNA"/>
</dbReference>
<dbReference type="RefSeq" id="WP_002964345.1">
    <property type="nucleotide sequence ID" value="NZ_KN046823.1"/>
</dbReference>
<dbReference type="SMR" id="Q2YRT3"/>
<dbReference type="STRING" id="359391.BAB1_1238"/>
<dbReference type="GeneID" id="93016456"/>
<dbReference type="KEGG" id="bmf:BAB1_1238"/>
<dbReference type="PATRIC" id="fig|359391.11.peg.138"/>
<dbReference type="HOGENOM" id="CLU_065898_2_2_5"/>
<dbReference type="PhylomeDB" id="Q2YRT3"/>
<dbReference type="Proteomes" id="UP000002719">
    <property type="component" value="Chromosome I"/>
</dbReference>
<dbReference type="GO" id="GO:0015935">
    <property type="term" value="C:small ribosomal subunit"/>
    <property type="evidence" value="ECO:0007669"/>
    <property type="project" value="InterPro"/>
</dbReference>
<dbReference type="GO" id="GO:0019843">
    <property type="term" value="F:rRNA binding"/>
    <property type="evidence" value="ECO:0007669"/>
    <property type="project" value="UniProtKB-UniRule"/>
</dbReference>
<dbReference type="GO" id="GO:0003735">
    <property type="term" value="F:structural constituent of ribosome"/>
    <property type="evidence" value="ECO:0007669"/>
    <property type="project" value="InterPro"/>
</dbReference>
<dbReference type="GO" id="GO:0006412">
    <property type="term" value="P:translation"/>
    <property type="evidence" value="ECO:0007669"/>
    <property type="project" value="UniProtKB-UniRule"/>
</dbReference>
<dbReference type="FunFam" id="3.30.160.20:FF:000001">
    <property type="entry name" value="30S ribosomal protein S5"/>
    <property type="match status" value="1"/>
</dbReference>
<dbReference type="FunFam" id="3.30.230.10:FF:000002">
    <property type="entry name" value="30S ribosomal protein S5"/>
    <property type="match status" value="1"/>
</dbReference>
<dbReference type="Gene3D" id="3.30.160.20">
    <property type="match status" value="1"/>
</dbReference>
<dbReference type="Gene3D" id="3.30.230.10">
    <property type="match status" value="1"/>
</dbReference>
<dbReference type="HAMAP" id="MF_01307_B">
    <property type="entry name" value="Ribosomal_uS5_B"/>
    <property type="match status" value="1"/>
</dbReference>
<dbReference type="InterPro" id="IPR020568">
    <property type="entry name" value="Ribosomal_Su5_D2-typ_SF"/>
</dbReference>
<dbReference type="InterPro" id="IPR000851">
    <property type="entry name" value="Ribosomal_uS5"/>
</dbReference>
<dbReference type="InterPro" id="IPR005712">
    <property type="entry name" value="Ribosomal_uS5_bac-type"/>
</dbReference>
<dbReference type="InterPro" id="IPR005324">
    <property type="entry name" value="Ribosomal_uS5_C"/>
</dbReference>
<dbReference type="InterPro" id="IPR013810">
    <property type="entry name" value="Ribosomal_uS5_N"/>
</dbReference>
<dbReference type="InterPro" id="IPR018192">
    <property type="entry name" value="Ribosomal_uS5_N_CS"/>
</dbReference>
<dbReference type="InterPro" id="IPR014721">
    <property type="entry name" value="Ribsml_uS5_D2-typ_fold_subgr"/>
</dbReference>
<dbReference type="NCBIfam" id="TIGR01021">
    <property type="entry name" value="rpsE_bact"/>
    <property type="match status" value="1"/>
</dbReference>
<dbReference type="PANTHER" id="PTHR48277">
    <property type="entry name" value="MITOCHONDRIAL RIBOSOMAL PROTEIN S5"/>
    <property type="match status" value="1"/>
</dbReference>
<dbReference type="PANTHER" id="PTHR48277:SF1">
    <property type="entry name" value="MITOCHONDRIAL RIBOSOMAL PROTEIN S5"/>
    <property type="match status" value="1"/>
</dbReference>
<dbReference type="Pfam" id="PF00333">
    <property type="entry name" value="Ribosomal_S5"/>
    <property type="match status" value="1"/>
</dbReference>
<dbReference type="Pfam" id="PF03719">
    <property type="entry name" value="Ribosomal_S5_C"/>
    <property type="match status" value="1"/>
</dbReference>
<dbReference type="SUPFAM" id="SSF54768">
    <property type="entry name" value="dsRNA-binding domain-like"/>
    <property type="match status" value="1"/>
</dbReference>
<dbReference type="SUPFAM" id="SSF54211">
    <property type="entry name" value="Ribosomal protein S5 domain 2-like"/>
    <property type="match status" value="1"/>
</dbReference>
<dbReference type="PROSITE" id="PS00585">
    <property type="entry name" value="RIBOSOMAL_S5"/>
    <property type="match status" value="1"/>
</dbReference>
<dbReference type="PROSITE" id="PS50881">
    <property type="entry name" value="S5_DSRBD"/>
    <property type="match status" value="1"/>
</dbReference>
<reference key="1">
    <citation type="journal article" date="2005" name="Infect. Immun.">
        <title>Whole-genome analyses of speciation events in pathogenic Brucellae.</title>
        <authorList>
            <person name="Chain P.S."/>
            <person name="Comerci D.J."/>
            <person name="Tolmasky M.E."/>
            <person name="Larimer F.W."/>
            <person name="Malfatti S.A."/>
            <person name="Vergez L.M."/>
            <person name="Aguero F."/>
            <person name="Land M.L."/>
            <person name="Ugalde R.A."/>
            <person name="Garcia E."/>
        </authorList>
    </citation>
    <scope>NUCLEOTIDE SEQUENCE [LARGE SCALE GENOMIC DNA]</scope>
    <source>
        <strain>2308</strain>
    </source>
</reference>
<gene>
    <name evidence="1" type="primary">rpsE</name>
    <name type="ordered locus">BAB1_1238</name>
</gene>
<accession>Q2YRT3</accession>
<sequence>MAQRERNREERGREERDSEFVDKLVHINRVAKVVKGGRRFGFAALVVVGDQKGRVGFGHGKAREVPEAIRKATEAAKRDMIFVPLRSGRTLHHDVEGRHGAGKVLLRAAPAGKGIIAGGPMRAVFETLGVQDVVAKSLGSSNPYNMVRATFDALKHQMHPKDIAAQRGIKYSTLQARRHDVVGSEE</sequence>
<keyword id="KW-1185">Reference proteome</keyword>
<keyword id="KW-0687">Ribonucleoprotein</keyword>
<keyword id="KW-0689">Ribosomal protein</keyword>
<keyword id="KW-0694">RNA-binding</keyword>
<keyword id="KW-0699">rRNA-binding</keyword>
<protein>
    <recommendedName>
        <fullName evidence="1">Small ribosomal subunit protein uS5</fullName>
    </recommendedName>
    <alternativeName>
        <fullName evidence="2">30S ribosomal protein S5</fullName>
    </alternativeName>
</protein>
<proteinExistence type="inferred from homology"/>